<proteinExistence type="inferred from homology"/>
<evidence type="ECO:0000250" key="1"/>
<evidence type="ECO:0000250" key="2">
    <source>
        <dbReference type="UniProtKB" id="O22317"/>
    </source>
</evidence>
<evidence type="ECO:0000255" key="3"/>
<evidence type="ECO:0000256" key="4">
    <source>
        <dbReference type="SAM" id="MobiDB-lite"/>
    </source>
</evidence>
<evidence type="ECO:0000305" key="5"/>
<protein>
    <recommendedName>
        <fullName>Probable beta-glucosidase btgE</fullName>
        <ecNumber>3.2.1.21</ecNumber>
    </recommendedName>
    <alternativeName>
        <fullName>Beta-D-glucoside glucohydrolase btgE</fullName>
    </alternativeName>
    <alternativeName>
        <fullName>Cellobiase btgE</fullName>
    </alternativeName>
    <alternativeName>
        <fullName>Gentiobiase btgE</fullName>
    </alternativeName>
</protein>
<dbReference type="EC" id="3.2.1.21"/>
<dbReference type="EMBL" id="BA000049">
    <property type="protein sequence ID" value="BAE55626.1"/>
    <property type="molecule type" value="Genomic_DNA"/>
</dbReference>
<dbReference type="SMR" id="Q2US39"/>
<dbReference type="STRING" id="510516.Q2US39"/>
<dbReference type="CAZy" id="GH17">
    <property type="family name" value="Glycoside Hydrolase Family 17"/>
</dbReference>
<dbReference type="EnsemblFungi" id="BAE55626">
    <property type="protein sequence ID" value="BAE55626"/>
    <property type="gene ID" value="AO090005000582"/>
</dbReference>
<dbReference type="VEuPathDB" id="FungiDB:AO090005000582"/>
<dbReference type="HOGENOM" id="CLU_027285_2_1_1"/>
<dbReference type="OMA" id="VVCPYAT"/>
<dbReference type="UniPathway" id="UPA00696"/>
<dbReference type="Proteomes" id="UP000006564">
    <property type="component" value="Chromosome 1"/>
</dbReference>
<dbReference type="GO" id="GO:0009986">
    <property type="term" value="C:cell surface"/>
    <property type="evidence" value="ECO:0007669"/>
    <property type="project" value="TreeGrafter"/>
</dbReference>
<dbReference type="GO" id="GO:0005576">
    <property type="term" value="C:extracellular region"/>
    <property type="evidence" value="ECO:0007669"/>
    <property type="project" value="UniProtKB-KW"/>
</dbReference>
<dbReference type="GO" id="GO:0009277">
    <property type="term" value="C:fungal-type cell wall"/>
    <property type="evidence" value="ECO:0007669"/>
    <property type="project" value="TreeGrafter"/>
</dbReference>
<dbReference type="GO" id="GO:0042973">
    <property type="term" value="F:glucan endo-1,3-beta-D-glucosidase activity"/>
    <property type="evidence" value="ECO:0007669"/>
    <property type="project" value="TreeGrafter"/>
</dbReference>
<dbReference type="GO" id="GO:0071555">
    <property type="term" value="P:cell wall organization"/>
    <property type="evidence" value="ECO:0007669"/>
    <property type="project" value="TreeGrafter"/>
</dbReference>
<dbReference type="GO" id="GO:0030245">
    <property type="term" value="P:cellulose catabolic process"/>
    <property type="evidence" value="ECO:0007669"/>
    <property type="project" value="UniProtKB-UniPathway"/>
</dbReference>
<dbReference type="FunFam" id="3.20.20.80:FF:000160">
    <property type="entry name" value="Probable beta-glucosidase btgE"/>
    <property type="match status" value="1"/>
</dbReference>
<dbReference type="Gene3D" id="3.20.20.80">
    <property type="entry name" value="Glycosidases"/>
    <property type="match status" value="2"/>
</dbReference>
<dbReference type="InterPro" id="IPR050732">
    <property type="entry name" value="Beta-glucan_modifiers"/>
</dbReference>
<dbReference type="InterPro" id="IPR017853">
    <property type="entry name" value="Glycoside_hydrolase_SF"/>
</dbReference>
<dbReference type="PANTHER" id="PTHR16631:SF24">
    <property type="entry name" value="FAMILY 17 GLUCOSIDASE SCW11-RELATED"/>
    <property type="match status" value="1"/>
</dbReference>
<dbReference type="PANTHER" id="PTHR16631">
    <property type="entry name" value="GLUCAN 1,3-BETA-GLUCOSIDASE"/>
    <property type="match status" value="1"/>
</dbReference>
<dbReference type="SUPFAM" id="SSF51445">
    <property type="entry name" value="(Trans)glycosidases"/>
    <property type="match status" value="1"/>
</dbReference>
<reference key="1">
    <citation type="journal article" date="2005" name="Nature">
        <title>Genome sequencing and analysis of Aspergillus oryzae.</title>
        <authorList>
            <person name="Machida M."/>
            <person name="Asai K."/>
            <person name="Sano M."/>
            <person name="Tanaka T."/>
            <person name="Kumagai T."/>
            <person name="Terai G."/>
            <person name="Kusumoto K."/>
            <person name="Arima T."/>
            <person name="Akita O."/>
            <person name="Kashiwagi Y."/>
            <person name="Abe K."/>
            <person name="Gomi K."/>
            <person name="Horiuchi H."/>
            <person name="Kitamoto K."/>
            <person name="Kobayashi T."/>
            <person name="Takeuchi M."/>
            <person name="Denning D.W."/>
            <person name="Galagan J.E."/>
            <person name="Nierman W.C."/>
            <person name="Yu J."/>
            <person name="Archer D.B."/>
            <person name="Bennett J.W."/>
            <person name="Bhatnagar D."/>
            <person name="Cleveland T.E."/>
            <person name="Fedorova N.D."/>
            <person name="Gotoh O."/>
            <person name="Horikawa H."/>
            <person name="Hosoyama A."/>
            <person name="Ichinomiya M."/>
            <person name="Igarashi R."/>
            <person name="Iwashita K."/>
            <person name="Juvvadi P.R."/>
            <person name="Kato M."/>
            <person name="Kato Y."/>
            <person name="Kin T."/>
            <person name="Kokubun A."/>
            <person name="Maeda H."/>
            <person name="Maeyama N."/>
            <person name="Maruyama J."/>
            <person name="Nagasaki H."/>
            <person name="Nakajima T."/>
            <person name="Oda K."/>
            <person name="Okada K."/>
            <person name="Paulsen I."/>
            <person name="Sakamoto K."/>
            <person name="Sawano T."/>
            <person name="Takahashi M."/>
            <person name="Takase K."/>
            <person name="Terabayashi Y."/>
            <person name="Wortman J.R."/>
            <person name="Yamada O."/>
            <person name="Yamagata Y."/>
            <person name="Anazawa H."/>
            <person name="Hata Y."/>
            <person name="Koide Y."/>
            <person name="Komori T."/>
            <person name="Koyama Y."/>
            <person name="Minetoki T."/>
            <person name="Suharnan S."/>
            <person name="Tanaka A."/>
            <person name="Isono K."/>
            <person name="Kuhara S."/>
            <person name="Ogasawara N."/>
            <person name="Kikuchi H."/>
        </authorList>
    </citation>
    <scope>NUCLEOTIDE SEQUENCE [LARGE SCALE GENOMIC DNA]</scope>
    <source>
        <strain>ATCC 42149 / RIB 40</strain>
    </source>
</reference>
<name>BTGE_ASPOR</name>
<sequence length="602" mass="61824">MRGAFLAAAAAVAGTAMADVAHMRRHGHDSFHHNRAYQPEVPAEGDENCECTTKVITITGPPTLVPINTPAPEPSSSSSSEVPSVPSSESSVVTSEAVTTLHSTSTATVTVVTTPGVDATGAQTPTGGVPGTPEASSPAGTPEASTPAVPATSESPLPTPGVTSFSSTGIYTIPATTVTVRDTTTVCGATTTELPSGTHTFGGVTTVVSTATTVTCPVATVEPSGSTVTSKIYTTTYVCPSAGTYTIAPTTTYVPTSTVVVYPTPATITPGTYTQDEQTVTVTRTDFTYVCPFTGNDQPTSAPVASTSAVPVTTTAAPSTTSAVASSSASASSTATAVPTGVSGQQMGMTYSPYTNEGGCQSKDQVLKDVALIKQKGFTHVRVYSTDCNGLEYIGEAARENGLKMIIGVFISSTGISGAQEQVTAITKWAQWDLVTLVVVGNEAIQNGYTDASSLAGFISSCKSSFQASGYSGQVTTTEPINVWQQSGSALCGAVDILGANLHPFFNADVTPDQAGSFVRAQIKDLEAVCNKDVINLETGWPSAGNANGKAVPGTAQQAAAIKALVEEVGSQSVFFSYSNDLWKDAGEFDVERYWGCIDQFK</sequence>
<feature type="signal peptide" evidence="3">
    <location>
        <begin position="1"/>
        <end position="18"/>
    </location>
</feature>
<feature type="chain" id="PRO_0000395134" description="Probable beta-glucosidase btgE">
    <location>
        <begin position="19"/>
        <end position="602"/>
    </location>
</feature>
<feature type="region of interest" description="Disordered" evidence="4">
    <location>
        <begin position="61"/>
        <end position="94"/>
    </location>
</feature>
<feature type="region of interest" description="Disordered" evidence="4">
    <location>
        <begin position="116"/>
        <end position="166"/>
    </location>
</feature>
<feature type="compositionally biased region" description="Low complexity" evidence="4">
    <location>
        <begin position="74"/>
        <end position="94"/>
    </location>
</feature>
<feature type="compositionally biased region" description="Polar residues" evidence="4">
    <location>
        <begin position="152"/>
        <end position="166"/>
    </location>
</feature>
<feature type="active site" description="Proton donor" evidence="2">
    <location>
        <position position="443"/>
    </location>
</feature>
<feature type="active site" description="Nucleophile" evidence="2">
    <location>
        <position position="538"/>
    </location>
</feature>
<gene>
    <name type="primary">btgE</name>
    <name type="ORF">AO090005000582</name>
</gene>
<keyword id="KW-0119">Carbohydrate metabolism</keyword>
<keyword id="KW-0134">Cell wall</keyword>
<keyword id="KW-0136">Cellulose degradation</keyword>
<keyword id="KW-0326">Glycosidase</keyword>
<keyword id="KW-0378">Hydrolase</keyword>
<keyword id="KW-0624">Polysaccharide degradation</keyword>
<keyword id="KW-1185">Reference proteome</keyword>
<keyword id="KW-0964">Secreted</keyword>
<keyword id="KW-0732">Signal</keyword>
<organism>
    <name type="scientific">Aspergillus oryzae (strain ATCC 42149 / RIB 40)</name>
    <name type="common">Yellow koji mold</name>
    <dbReference type="NCBI Taxonomy" id="510516"/>
    <lineage>
        <taxon>Eukaryota</taxon>
        <taxon>Fungi</taxon>
        <taxon>Dikarya</taxon>
        <taxon>Ascomycota</taxon>
        <taxon>Pezizomycotina</taxon>
        <taxon>Eurotiomycetes</taxon>
        <taxon>Eurotiomycetidae</taxon>
        <taxon>Eurotiales</taxon>
        <taxon>Aspergillaceae</taxon>
        <taxon>Aspergillus</taxon>
        <taxon>Aspergillus subgen. Circumdati</taxon>
    </lineage>
</organism>
<comment type="function">
    <text evidence="1">Beta-glucosidases are one of a number of cellulolytic enzymes involved in the degradation of cellulosic biomass. Catalyzes the last step releasing glucose from the inhibitory cellobiose (By similarity).</text>
</comment>
<comment type="catalytic activity">
    <reaction>
        <text>Hydrolysis of terminal, non-reducing beta-D-glucosyl residues with release of beta-D-glucose.</text>
        <dbReference type="EC" id="3.2.1.21"/>
    </reaction>
</comment>
<comment type="pathway">
    <text>Glycan metabolism; cellulose degradation.</text>
</comment>
<comment type="subcellular location">
    <subcellularLocation>
        <location evidence="1">Secreted</location>
        <location evidence="1">Cell wall</location>
    </subcellularLocation>
    <text evidence="1">Covalently-linked to the cell wall.</text>
</comment>
<comment type="similarity">
    <text evidence="5">Belongs to the glycosyl hydrolase 17 family.</text>
</comment>
<accession>Q2US39</accession>